<accession>Q2IHZ5</accession>
<feature type="chain" id="PRO_0000301275" description="Phosphoglucosamine mutase">
    <location>
        <begin position="1"/>
        <end position="458"/>
    </location>
</feature>
<feature type="active site" description="Phosphoserine intermediate" evidence="1">
    <location>
        <position position="102"/>
    </location>
</feature>
<feature type="binding site" description="via phosphate group" evidence="1">
    <location>
        <position position="102"/>
    </location>
    <ligand>
        <name>Mg(2+)</name>
        <dbReference type="ChEBI" id="CHEBI:18420"/>
    </ligand>
</feature>
<feature type="binding site" evidence="1">
    <location>
        <position position="252"/>
    </location>
    <ligand>
        <name>Mg(2+)</name>
        <dbReference type="ChEBI" id="CHEBI:18420"/>
    </ligand>
</feature>
<feature type="binding site" evidence="1">
    <location>
        <position position="254"/>
    </location>
    <ligand>
        <name>Mg(2+)</name>
        <dbReference type="ChEBI" id="CHEBI:18420"/>
    </ligand>
</feature>
<feature type="binding site" evidence="1">
    <location>
        <position position="256"/>
    </location>
    <ligand>
        <name>Mg(2+)</name>
        <dbReference type="ChEBI" id="CHEBI:18420"/>
    </ligand>
</feature>
<feature type="modified residue" description="Phosphoserine" evidence="1">
    <location>
        <position position="102"/>
    </location>
</feature>
<keyword id="KW-0413">Isomerase</keyword>
<keyword id="KW-0460">Magnesium</keyword>
<keyword id="KW-0479">Metal-binding</keyword>
<keyword id="KW-0597">Phosphoprotein</keyword>
<keyword id="KW-1185">Reference proteome</keyword>
<name>GLMM_ANADE</name>
<sequence>MARRLFGTDGVRGVANVHPMTAEMALQLGRALAYIVRSGPHRHRIVIGKDTRLSGYMLEQAIASGICSMGVDVMLCGPLPTPGIAFVTHSMRADAGVVISASHNPYQDNGIKFFSRDGFKLPDELELQIERLVLDAGEDDAGAEEFRALRPTATRIGKAKRIDDAIGRYAQFLKTIFPKELTLDGLTVVVDCAHGAAYHVAPAVFEELGAKVIPLNVKPDGKNINDACGAVHPESMARAVKRHGANLGLALDGDADRVILADEHGNVVDGDAIMALVGRDLLARKALAKRTVVATVMSNLGLERALAPLGGKVVRTAVGDRYVVEEMRRSGYSFGGEQSGHLVFLDHVTTGDGVAAGLNVLAVMVREGKPLSELARCFEPFPQALVNVEVREKRPVAELPGVAKAIAAAEKALGAEGRVLVRPSGTENKVRVLVEGPDAKRARALADGIAAELRQAIG</sequence>
<proteinExistence type="inferred from homology"/>
<comment type="function">
    <text evidence="1">Catalyzes the conversion of glucosamine-6-phosphate to glucosamine-1-phosphate.</text>
</comment>
<comment type="catalytic activity">
    <reaction evidence="1">
        <text>alpha-D-glucosamine 1-phosphate = D-glucosamine 6-phosphate</text>
        <dbReference type="Rhea" id="RHEA:23424"/>
        <dbReference type="ChEBI" id="CHEBI:58516"/>
        <dbReference type="ChEBI" id="CHEBI:58725"/>
        <dbReference type="EC" id="5.4.2.10"/>
    </reaction>
</comment>
<comment type="cofactor">
    <cofactor evidence="1">
        <name>Mg(2+)</name>
        <dbReference type="ChEBI" id="CHEBI:18420"/>
    </cofactor>
    <text evidence="1">Binds 1 Mg(2+) ion per subunit.</text>
</comment>
<comment type="PTM">
    <text evidence="1">Activated by phosphorylation.</text>
</comment>
<comment type="similarity">
    <text evidence="1">Belongs to the phosphohexose mutase family.</text>
</comment>
<reference key="1">
    <citation type="submission" date="2006-01" db="EMBL/GenBank/DDBJ databases">
        <title>Complete sequence of Anaeromyxobacter dehalogenans 2CP-C.</title>
        <authorList>
            <person name="Copeland A."/>
            <person name="Lucas S."/>
            <person name="Lapidus A."/>
            <person name="Barry K."/>
            <person name="Detter J.C."/>
            <person name="Glavina T."/>
            <person name="Hammon N."/>
            <person name="Israni S."/>
            <person name="Pitluck S."/>
            <person name="Brettin T."/>
            <person name="Bruce D."/>
            <person name="Han C."/>
            <person name="Tapia R."/>
            <person name="Gilna P."/>
            <person name="Kiss H."/>
            <person name="Schmutz J."/>
            <person name="Larimer F."/>
            <person name="Land M."/>
            <person name="Kyrpides N."/>
            <person name="Anderson I."/>
            <person name="Sanford R.A."/>
            <person name="Ritalahti K.M."/>
            <person name="Thomas H.S."/>
            <person name="Kirby J.R."/>
            <person name="Zhulin I.B."/>
            <person name="Loeffler F.E."/>
            <person name="Richardson P."/>
        </authorList>
    </citation>
    <scope>NUCLEOTIDE SEQUENCE [LARGE SCALE GENOMIC DNA]</scope>
    <source>
        <strain>2CP-C</strain>
    </source>
</reference>
<protein>
    <recommendedName>
        <fullName evidence="1">Phosphoglucosamine mutase</fullName>
        <ecNumber evidence="1">5.4.2.10</ecNumber>
    </recommendedName>
</protein>
<gene>
    <name evidence="1" type="primary">glmM</name>
    <name type="ordered locus">Adeh_1499</name>
</gene>
<organism>
    <name type="scientific">Anaeromyxobacter dehalogenans (strain 2CP-C)</name>
    <dbReference type="NCBI Taxonomy" id="290397"/>
    <lineage>
        <taxon>Bacteria</taxon>
        <taxon>Pseudomonadati</taxon>
        <taxon>Myxococcota</taxon>
        <taxon>Myxococcia</taxon>
        <taxon>Myxococcales</taxon>
        <taxon>Cystobacterineae</taxon>
        <taxon>Anaeromyxobacteraceae</taxon>
        <taxon>Anaeromyxobacter</taxon>
    </lineage>
</organism>
<dbReference type="EC" id="5.4.2.10" evidence="1"/>
<dbReference type="EMBL" id="CP000251">
    <property type="protein sequence ID" value="ABC81272.1"/>
    <property type="molecule type" value="Genomic_DNA"/>
</dbReference>
<dbReference type="SMR" id="Q2IHZ5"/>
<dbReference type="STRING" id="290397.Adeh_1499"/>
<dbReference type="KEGG" id="ade:Adeh_1499"/>
<dbReference type="eggNOG" id="COG1109">
    <property type="taxonomic scope" value="Bacteria"/>
</dbReference>
<dbReference type="HOGENOM" id="CLU_016950_7_0_7"/>
<dbReference type="OrthoDB" id="9806956at2"/>
<dbReference type="Proteomes" id="UP000001935">
    <property type="component" value="Chromosome"/>
</dbReference>
<dbReference type="GO" id="GO:0005829">
    <property type="term" value="C:cytosol"/>
    <property type="evidence" value="ECO:0007669"/>
    <property type="project" value="TreeGrafter"/>
</dbReference>
<dbReference type="GO" id="GO:0000287">
    <property type="term" value="F:magnesium ion binding"/>
    <property type="evidence" value="ECO:0007669"/>
    <property type="project" value="UniProtKB-UniRule"/>
</dbReference>
<dbReference type="GO" id="GO:0008966">
    <property type="term" value="F:phosphoglucosamine mutase activity"/>
    <property type="evidence" value="ECO:0007669"/>
    <property type="project" value="UniProtKB-UniRule"/>
</dbReference>
<dbReference type="GO" id="GO:0004615">
    <property type="term" value="F:phosphomannomutase activity"/>
    <property type="evidence" value="ECO:0007669"/>
    <property type="project" value="TreeGrafter"/>
</dbReference>
<dbReference type="GO" id="GO:0005975">
    <property type="term" value="P:carbohydrate metabolic process"/>
    <property type="evidence" value="ECO:0007669"/>
    <property type="project" value="InterPro"/>
</dbReference>
<dbReference type="GO" id="GO:0009252">
    <property type="term" value="P:peptidoglycan biosynthetic process"/>
    <property type="evidence" value="ECO:0007669"/>
    <property type="project" value="TreeGrafter"/>
</dbReference>
<dbReference type="GO" id="GO:0006048">
    <property type="term" value="P:UDP-N-acetylglucosamine biosynthetic process"/>
    <property type="evidence" value="ECO:0007669"/>
    <property type="project" value="TreeGrafter"/>
</dbReference>
<dbReference type="CDD" id="cd05802">
    <property type="entry name" value="GlmM"/>
    <property type="match status" value="1"/>
</dbReference>
<dbReference type="FunFam" id="3.30.310.50:FF:000001">
    <property type="entry name" value="Phosphoglucosamine mutase"/>
    <property type="match status" value="1"/>
</dbReference>
<dbReference type="FunFam" id="3.40.120.10:FF:000001">
    <property type="entry name" value="Phosphoglucosamine mutase"/>
    <property type="match status" value="1"/>
</dbReference>
<dbReference type="FunFam" id="3.40.120.10:FF:000002">
    <property type="entry name" value="Phosphoglucosamine mutase"/>
    <property type="match status" value="1"/>
</dbReference>
<dbReference type="Gene3D" id="3.40.120.10">
    <property type="entry name" value="Alpha-D-Glucose-1,6-Bisphosphate, subunit A, domain 3"/>
    <property type="match status" value="3"/>
</dbReference>
<dbReference type="Gene3D" id="3.30.310.50">
    <property type="entry name" value="Alpha-D-phosphohexomutase, C-terminal domain"/>
    <property type="match status" value="1"/>
</dbReference>
<dbReference type="HAMAP" id="MF_01554_B">
    <property type="entry name" value="GlmM_B"/>
    <property type="match status" value="1"/>
</dbReference>
<dbReference type="InterPro" id="IPR005844">
    <property type="entry name" value="A-D-PHexomutase_a/b/a-I"/>
</dbReference>
<dbReference type="InterPro" id="IPR016055">
    <property type="entry name" value="A-D-PHexomutase_a/b/a-I/II/III"/>
</dbReference>
<dbReference type="InterPro" id="IPR005845">
    <property type="entry name" value="A-D-PHexomutase_a/b/a-II"/>
</dbReference>
<dbReference type="InterPro" id="IPR005846">
    <property type="entry name" value="A-D-PHexomutase_a/b/a-III"/>
</dbReference>
<dbReference type="InterPro" id="IPR005843">
    <property type="entry name" value="A-D-PHexomutase_C"/>
</dbReference>
<dbReference type="InterPro" id="IPR036900">
    <property type="entry name" value="A-D-PHexomutase_C_sf"/>
</dbReference>
<dbReference type="InterPro" id="IPR016066">
    <property type="entry name" value="A-D-PHexomutase_CS"/>
</dbReference>
<dbReference type="InterPro" id="IPR005841">
    <property type="entry name" value="Alpha-D-phosphohexomutase_SF"/>
</dbReference>
<dbReference type="InterPro" id="IPR006352">
    <property type="entry name" value="GlmM_bact"/>
</dbReference>
<dbReference type="InterPro" id="IPR050060">
    <property type="entry name" value="Phosphoglucosamine_mutase"/>
</dbReference>
<dbReference type="NCBIfam" id="TIGR01455">
    <property type="entry name" value="glmM"/>
    <property type="match status" value="1"/>
</dbReference>
<dbReference type="NCBIfam" id="NF008139">
    <property type="entry name" value="PRK10887.1"/>
    <property type="match status" value="1"/>
</dbReference>
<dbReference type="PANTHER" id="PTHR42946:SF1">
    <property type="entry name" value="PHOSPHOGLUCOMUTASE (ALPHA-D-GLUCOSE-1,6-BISPHOSPHATE-DEPENDENT)"/>
    <property type="match status" value="1"/>
</dbReference>
<dbReference type="PANTHER" id="PTHR42946">
    <property type="entry name" value="PHOSPHOHEXOSE MUTASE"/>
    <property type="match status" value="1"/>
</dbReference>
<dbReference type="Pfam" id="PF02878">
    <property type="entry name" value="PGM_PMM_I"/>
    <property type="match status" value="1"/>
</dbReference>
<dbReference type="Pfam" id="PF02879">
    <property type="entry name" value="PGM_PMM_II"/>
    <property type="match status" value="1"/>
</dbReference>
<dbReference type="Pfam" id="PF02880">
    <property type="entry name" value="PGM_PMM_III"/>
    <property type="match status" value="1"/>
</dbReference>
<dbReference type="Pfam" id="PF00408">
    <property type="entry name" value="PGM_PMM_IV"/>
    <property type="match status" value="1"/>
</dbReference>
<dbReference type="PRINTS" id="PR00509">
    <property type="entry name" value="PGMPMM"/>
</dbReference>
<dbReference type="SUPFAM" id="SSF55957">
    <property type="entry name" value="Phosphoglucomutase, C-terminal domain"/>
    <property type="match status" value="1"/>
</dbReference>
<dbReference type="SUPFAM" id="SSF53738">
    <property type="entry name" value="Phosphoglucomutase, first 3 domains"/>
    <property type="match status" value="3"/>
</dbReference>
<dbReference type="PROSITE" id="PS00710">
    <property type="entry name" value="PGM_PMM"/>
    <property type="match status" value="1"/>
</dbReference>
<evidence type="ECO:0000255" key="1">
    <source>
        <dbReference type="HAMAP-Rule" id="MF_01554"/>
    </source>
</evidence>